<keyword id="KW-0333">Golgi apparatus</keyword>
<keyword id="KW-1185">Reference proteome</keyword>
<keyword id="KW-0813">Transport</keyword>
<reference key="1">
    <citation type="journal article" date="2002" name="Nature">
        <title>The genome sequence of Schizosaccharomyces pombe.</title>
        <authorList>
            <person name="Wood V."/>
            <person name="Gwilliam R."/>
            <person name="Rajandream M.A."/>
            <person name="Lyne M.H."/>
            <person name="Lyne R."/>
            <person name="Stewart A."/>
            <person name="Sgouros J.G."/>
            <person name="Peat N."/>
            <person name="Hayles J."/>
            <person name="Baker S.G."/>
            <person name="Basham D."/>
            <person name="Bowman S."/>
            <person name="Brooks K."/>
            <person name="Brown D."/>
            <person name="Brown S."/>
            <person name="Chillingworth T."/>
            <person name="Churcher C.M."/>
            <person name="Collins M."/>
            <person name="Connor R."/>
            <person name="Cronin A."/>
            <person name="Davis P."/>
            <person name="Feltwell T."/>
            <person name="Fraser A."/>
            <person name="Gentles S."/>
            <person name="Goble A."/>
            <person name="Hamlin N."/>
            <person name="Harris D.E."/>
            <person name="Hidalgo J."/>
            <person name="Hodgson G."/>
            <person name="Holroyd S."/>
            <person name="Hornsby T."/>
            <person name="Howarth S."/>
            <person name="Huckle E.J."/>
            <person name="Hunt S."/>
            <person name="Jagels K."/>
            <person name="James K.D."/>
            <person name="Jones L."/>
            <person name="Jones M."/>
            <person name="Leather S."/>
            <person name="McDonald S."/>
            <person name="McLean J."/>
            <person name="Mooney P."/>
            <person name="Moule S."/>
            <person name="Mungall K.L."/>
            <person name="Murphy L.D."/>
            <person name="Niblett D."/>
            <person name="Odell C."/>
            <person name="Oliver K."/>
            <person name="O'Neil S."/>
            <person name="Pearson D."/>
            <person name="Quail M.A."/>
            <person name="Rabbinowitsch E."/>
            <person name="Rutherford K.M."/>
            <person name="Rutter S."/>
            <person name="Saunders D."/>
            <person name="Seeger K."/>
            <person name="Sharp S."/>
            <person name="Skelton J."/>
            <person name="Simmonds M.N."/>
            <person name="Squares R."/>
            <person name="Squares S."/>
            <person name="Stevens K."/>
            <person name="Taylor K."/>
            <person name="Taylor R.G."/>
            <person name="Tivey A."/>
            <person name="Walsh S.V."/>
            <person name="Warren T."/>
            <person name="Whitehead S."/>
            <person name="Woodward J.R."/>
            <person name="Volckaert G."/>
            <person name="Aert R."/>
            <person name="Robben J."/>
            <person name="Grymonprez B."/>
            <person name="Weltjens I."/>
            <person name="Vanstreels E."/>
            <person name="Rieger M."/>
            <person name="Schaefer M."/>
            <person name="Mueller-Auer S."/>
            <person name="Gabel C."/>
            <person name="Fuchs M."/>
            <person name="Duesterhoeft A."/>
            <person name="Fritzc C."/>
            <person name="Holzer E."/>
            <person name="Moestl D."/>
            <person name="Hilbert H."/>
            <person name="Borzym K."/>
            <person name="Langer I."/>
            <person name="Beck A."/>
            <person name="Lehrach H."/>
            <person name="Reinhardt R."/>
            <person name="Pohl T.M."/>
            <person name="Eger P."/>
            <person name="Zimmermann W."/>
            <person name="Wedler H."/>
            <person name="Wambutt R."/>
            <person name="Purnelle B."/>
            <person name="Goffeau A."/>
            <person name="Cadieu E."/>
            <person name="Dreano S."/>
            <person name="Gloux S."/>
            <person name="Lelaure V."/>
            <person name="Mottier S."/>
            <person name="Galibert F."/>
            <person name="Aves S.J."/>
            <person name="Xiang Z."/>
            <person name="Hunt C."/>
            <person name="Moore K."/>
            <person name="Hurst S.M."/>
            <person name="Lucas M."/>
            <person name="Rochet M."/>
            <person name="Gaillardin C."/>
            <person name="Tallada V.A."/>
            <person name="Garzon A."/>
            <person name="Thode G."/>
            <person name="Daga R.R."/>
            <person name="Cruzado L."/>
            <person name="Jimenez J."/>
            <person name="Sanchez M."/>
            <person name="del Rey F."/>
            <person name="Benito J."/>
            <person name="Dominguez A."/>
            <person name="Revuelta J.L."/>
            <person name="Moreno S."/>
            <person name="Armstrong J."/>
            <person name="Forsburg S.L."/>
            <person name="Cerutti L."/>
            <person name="Lowe T."/>
            <person name="McCombie W.R."/>
            <person name="Paulsen I."/>
            <person name="Potashkin J."/>
            <person name="Shpakovski G.V."/>
            <person name="Ussery D."/>
            <person name="Barrell B.G."/>
            <person name="Nurse P."/>
        </authorList>
    </citation>
    <scope>NUCLEOTIDE SEQUENCE [LARGE SCALE GENOMIC DNA]</scope>
    <source>
        <strain>972 / ATCC 24843</strain>
    </source>
</reference>
<comment type="function">
    <text evidence="1">Component of the TRAPP II complex. TRAPP II seems to play a role in intra-Golgi transport (By similarity).</text>
</comment>
<comment type="subunit">
    <text evidence="1">Part of the multisubunit TRAPP (transport protein particle) II complex.</text>
</comment>
<comment type="subcellular location">
    <subcellularLocation>
        <location evidence="1">Golgi apparatus</location>
        <location evidence="1">cis-Golgi network</location>
    </subcellularLocation>
</comment>
<comment type="similarity">
    <text evidence="3">Belongs to the TRS120 family.</text>
</comment>
<proteinExistence type="inferred from homology"/>
<feature type="chain" id="PRO_0000374006" description="Transport protein particle subunit trs120">
    <location>
        <begin position="1"/>
        <end position="1210"/>
    </location>
</feature>
<feature type="region of interest" description="Disordered" evidence="2">
    <location>
        <begin position="211"/>
        <end position="243"/>
    </location>
</feature>
<feature type="compositionally biased region" description="Low complexity" evidence="2">
    <location>
        <begin position="214"/>
        <end position="233"/>
    </location>
</feature>
<gene>
    <name type="primary">trs120</name>
    <name type="ORF">SPAC6G10.05c</name>
</gene>
<sequence length="1210" mass="137758">MEFDFFSFVAPSRVQSLVLPFGRVRRKSFSSYLQLLRRVSHIQLSDVPVATATRKSSSFNPLAFPLGRLVYNFLTSLDDQQALLEEFEYFRRVFVLIGIVDGSEEQEVEQLCSTLDVWRRRIPHALVAKCIVFNCPEDKENIFNAPNIIIGPRSDFSINSVMRSILCDITAELLEGFSSLEFSIHARSVILSPITDMPHLAPLQRKNSNASIHSLGSSSRPTLTRTPSITSRSVNSVTERSKSLSKGRIENQFGQLYLLAGRVPNALKHFSTAIALSKATGDFLWQGLSLELFTVCLVIMAHLHVDVQIPPNILSMFPSYNDRLNAFGPLKFDALLNFITEMRNVVDQLYQKSTLQPNDAVPGLCFSESILRYAHLLTVVYSCKGFNDNALDHIIAQAPIRPVKKATTYVPNKATICQWIMRAQGQHLNSLSIRERCRIYGAMANMLGSIGFSRLRVKMLRELVASLTPVLLETRRQNASKNGIHPEVIASHTAQSFKSTHYCNILPLISEICQEYGLLKTDGSLLNPELTKWGWSNLQFDVLNELISLCDSLSDYRSILLLISLFFLTSVQTASSSQQISMFKAFRKTYLFASNAGIHINAPYWDPFMITDLKFIGSSENAELIHQRLRNGLPKSIEKGPFIYNPFNRRQDQNQSKSVLVVDEQVAFSIYFRNPLSVSVEVQDVHLETKGVSAKCSHSTFTMRPLSIERTTLTVTPTETGELHIVGCRVKVFGCEPILQYVYEAKDKHKSLHVYLEKSKDVNAELRSLDTIDHLWTYFPFKKDLKTKSFDCIVIASQPKLSLAFQNLTSGKFNFAEYETGELVYVIENTSFVEASHISVLFEDSSSKAFEQAIADKSITADRLYELQFEEFNLPTFTVESSQPFSLSPGERREIHIKIRAKPNSQEGLILFESSVHKPEDTEFYVRRLRIPVSLNISKRVDLKQWSAFMDTEGDPSYCLVLLNFYNHFSEPLFVTVKTASTDESRSVLIKPKADNVILFRLKRFIMSSEEINLDIPNLSTKQFVLSSGFKKSIEDSYTMKKRFWIKEYFLKEVQASWKTDDNLHHGEIYLRNHILSDEMANNLSILPIRIQAWVSYDSEKVTTVCPREPFKLVLEFFGHADTNMRYKISWTQLNTQANTSSFNGLILDGPEEDIVCFNNSKCHVVIERNMFAYTTGMYNIFVRIFNEELQLLSQPVDLDEPILLIVDAK</sequence>
<name>TR120_SCHPO</name>
<protein>
    <recommendedName>
        <fullName>Transport protein particle subunit trs120</fullName>
        <shortName>TRAPP subunit trs120</shortName>
    </recommendedName>
</protein>
<dbReference type="EMBL" id="CU329670">
    <property type="protein sequence ID" value="CAB11291.1"/>
    <property type="molecule type" value="Genomic_DNA"/>
</dbReference>
<dbReference type="PIR" id="T39055">
    <property type="entry name" value="T39055"/>
</dbReference>
<dbReference type="RefSeq" id="NP_594102.1">
    <property type="nucleotide sequence ID" value="NM_001019526.2"/>
</dbReference>
<dbReference type="SMR" id="O14251"/>
<dbReference type="BioGRID" id="278839">
    <property type="interactions" value="6"/>
</dbReference>
<dbReference type="FunCoup" id="O14251">
    <property type="interactions" value="84"/>
</dbReference>
<dbReference type="STRING" id="284812.O14251"/>
<dbReference type="iPTMnet" id="O14251"/>
<dbReference type="PaxDb" id="4896-SPAC6G10.05c.1"/>
<dbReference type="EnsemblFungi" id="SPAC6G10.05c.1">
    <property type="protein sequence ID" value="SPAC6G10.05c.1:pep"/>
    <property type="gene ID" value="SPAC6G10.05c"/>
</dbReference>
<dbReference type="GeneID" id="2542375"/>
<dbReference type="KEGG" id="spo:2542375"/>
<dbReference type="PomBase" id="SPAC6G10.05c">
    <property type="gene designation" value="trs120"/>
</dbReference>
<dbReference type="VEuPathDB" id="FungiDB:SPAC6G10.05c"/>
<dbReference type="eggNOG" id="KOG1953">
    <property type="taxonomic scope" value="Eukaryota"/>
</dbReference>
<dbReference type="HOGENOM" id="CLU_002231_0_0_1"/>
<dbReference type="InParanoid" id="O14251"/>
<dbReference type="OMA" id="EHSRDRM"/>
<dbReference type="PhylomeDB" id="O14251"/>
<dbReference type="Reactome" id="R-SPO-204005">
    <property type="pathway name" value="COPII-mediated vesicle transport"/>
</dbReference>
<dbReference type="Reactome" id="R-SPO-8876198">
    <property type="pathway name" value="RAB GEFs exchange GTP for GDP on RABs"/>
</dbReference>
<dbReference type="PRO" id="PR:O14251"/>
<dbReference type="Proteomes" id="UP000002485">
    <property type="component" value="Chromosome I"/>
</dbReference>
<dbReference type="GO" id="GO:0032153">
    <property type="term" value="C:cell division site"/>
    <property type="evidence" value="ECO:0007005"/>
    <property type="project" value="PomBase"/>
</dbReference>
<dbReference type="GO" id="GO:0005801">
    <property type="term" value="C:cis-Golgi network"/>
    <property type="evidence" value="ECO:0000303"/>
    <property type="project" value="PomBase"/>
</dbReference>
<dbReference type="GO" id="GO:0032154">
    <property type="term" value="C:cleavage furrow"/>
    <property type="evidence" value="ECO:0000269"/>
    <property type="project" value="PomBase"/>
</dbReference>
<dbReference type="GO" id="GO:0035838">
    <property type="term" value="C:growing cell tip"/>
    <property type="evidence" value="ECO:0000269"/>
    <property type="project" value="PomBase"/>
</dbReference>
<dbReference type="GO" id="GO:0005802">
    <property type="term" value="C:trans-Golgi network"/>
    <property type="evidence" value="ECO:0000318"/>
    <property type="project" value="GO_Central"/>
</dbReference>
<dbReference type="GO" id="GO:1990071">
    <property type="term" value="C:TRAPPII protein complex"/>
    <property type="evidence" value="ECO:0000266"/>
    <property type="project" value="PomBase"/>
</dbReference>
<dbReference type="GO" id="GO:0006893">
    <property type="term" value="P:Golgi to plasma membrane transport"/>
    <property type="evidence" value="ECO:0000269"/>
    <property type="project" value="PomBase"/>
</dbReference>
<dbReference type="GO" id="GO:0006891">
    <property type="term" value="P:intra-Golgi vesicle-mediated transport"/>
    <property type="evidence" value="ECO:0000305"/>
    <property type="project" value="PomBase"/>
</dbReference>
<dbReference type="GO" id="GO:0006886">
    <property type="term" value="P:intracellular protein transport"/>
    <property type="evidence" value="ECO:0000305"/>
    <property type="project" value="PomBase"/>
</dbReference>
<dbReference type="GO" id="GO:0061796">
    <property type="term" value="P:membrane addition at site of mitotic cytokinesis"/>
    <property type="evidence" value="ECO:0000269"/>
    <property type="project" value="PomBase"/>
</dbReference>
<dbReference type="InterPro" id="IPR013935">
    <property type="entry name" value="TRAPP_II_complex_Trs120"/>
</dbReference>
<dbReference type="PANTHER" id="PTHR21512">
    <property type="entry name" value="TRAFFICKING PROTEIN PARTICLE COMPLEX SUBUNIT 9"/>
    <property type="match status" value="1"/>
</dbReference>
<dbReference type="PANTHER" id="PTHR21512:SF5">
    <property type="entry name" value="TRAFFICKING PROTEIN PARTICLE COMPLEX SUBUNIT 9"/>
    <property type="match status" value="1"/>
</dbReference>
<dbReference type="Pfam" id="PF08626">
    <property type="entry name" value="TRAPPC9-Trs120"/>
    <property type="match status" value="1"/>
</dbReference>
<accession>O14251</accession>
<organism>
    <name type="scientific">Schizosaccharomyces pombe (strain 972 / ATCC 24843)</name>
    <name type="common">Fission yeast</name>
    <dbReference type="NCBI Taxonomy" id="284812"/>
    <lineage>
        <taxon>Eukaryota</taxon>
        <taxon>Fungi</taxon>
        <taxon>Dikarya</taxon>
        <taxon>Ascomycota</taxon>
        <taxon>Taphrinomycotina</taxon>
        <taxon>Schizosaccharomycetes</taxon>
        <taxon>Schizosaccharomycetales</taxon>
        <taxon>Schizosaccharomycetaceae</taxon>
        <taxon>Schizosaccharomyces</taxon>
    </lineage>
</organism>
<evidence type="ECO:0000250" key="1"/>
<evidence type="ECO:0000256" key="2">
    <source>
        <dbReference type="SAM" id="MobiDB-lite"/>
    </source>
</evidence>
<evidence type="ECO:0000305" key="3"/>